<comment type="function">
    <text evidence="1">Nucleotidase that shows phosphatase activity on nucleoside 5'-monophosphates.</text>
</comment>
<comment type="catalytic activity">
    <reaction evidence="1">
        <text>a ribonucleoside 5'-phosphate + H2O = a ribonucleoside + phosphate</text>
        <dbReference type="Rhea" id="RHEA:12484"/>
        <dbReference type="ChEBI" id="CHEBI:15377"/>
        <dbReference type="ChEBI" id="CHEBI:18254"/>
        <dbReference type="ChEBI" id="CHEBI:43474"/>
        <dbReference type="ChEBI" id="CHEBI:58043"/>
        <dbReference type="EC" id="3.1.3.5"/>
    </reaction>
</comment>
<comment type="cofactor">
    <cofactor evidence="1">
        <name>a divalent metal cation</name>
        <dbReference type="ChEBI" id="CHEBI:60240"/>
    </cofactor>
    <text evidence="1">Binds 1 divalent metal cation per subunit.</text>
</comment>
<comment type="subcellular location">
    <subcellularLocation>
        <location evidence="1">Cytoplasm</location>
    </subcellularLocation>
</comment>
<comment type="similarity">
    <text evidence="1">Belongs to the SurE nucleotidase family.</text>
</comment>
<dbReference type="EC" id="3.1.3.5" evidence="1"/>
<dbReference type="EMBL" id="AE017340">
    <property type="protein sequence ID" value="AAV81590.1"/>
    <property type="molecule type" value="Genomic_DNA"/>
</dbReference>
<dbReference type="RefSeq" id="WP_011234001.1">
    <property type="nucleotide sequence ID" value="NC_006512.1"/>
</dbReference>
<dbReference type="SMR" id="Q5QUC6"/>
<dbReference type="STRING" id="283942.IL0749"/>
<dbReference type="GeneID" id="41335903"/>
<dbReference type="KEGG" id="ilo:IL0749"/>
<dbReference type="eggNOG" id="COG0496">
    <property type="taxonomic scope" value="Bacteria"/>
</dbReference>
<dbReference type="HOGENOM" id="CLU_045192_1_2_6"/>
<dbReference type="OrthoDB" id="9780815at2"/>
<dbReference type="Proteomes" id="UP000001171">
    <property type="component" value="Chromosome"/>
</dbReference>
<dbReference type="GO" id="GO:0005737">
    <property type="term" value="C:cytoplasm"/>
    <property type="evidence" value="ECO:0007669"/>
    <property type="project" value="UniProtKB-SubCell"/>
</dbReference>
<dbReference type="GO" id="GO:0008254">
    <property type="term" value="F:3'-nucleotidase activity"/>
    <property type="evidence" value="ECO:0007669"/>
    <property type="project" value="TreeGrafter"/>
</dbReference>
<dbReference type="GO" id="GO:0008253">
    <property type="term" value="F:5'-nucleotidase activity"/>
    <property type="evidence" value="ECO:0007669"/>
    <property type="project" value="UniProtKB-UniRule"/>
</dbReference>
<dbReference type="GO" id="GO:0004309">
    <property type="term" value="F:exopolyphosphatase activity"/>
    <property type="evidence" value="ECO:0007669"/>
    <property type="project" value="TreeGrafter"/>
</dbReference>
<dbReference type="GO" id="GO:0046872">
    <property type="term" value="F:metal ion binding"/>
    <property type="evidence" value="ECO:0007669"/>
    <property type="project" value="UniProtKB-UniRule"/>
</dbReference>
<dbReference type="GO" id="GO:0000166">
    <property type="term" value="F:nucleotide binding"/>
    <property type="evidence" value="ECO:0007669"/>
    <property type="project" value="UniProtKB-KW"/>
</dbReference>
<dbReference type="FunFam" id="3.40.1210.10:FF:000001">
    <property type="entry name" value="5'/3'-nucleotidase SurE"/>
    <property type="match status" value="1"/>
</dbReference>
<dbReference type="Gene3D" id="3.40.1210.10">
    <property type="entry name" value="Survival protein SurE-like phosphatase/nucleotidase"/>
    <property type="match status" value="1"/>
</dbReference>
<dbReference type="HAMAP" id="MF_00060">
    <property type="entry name" value="SurE"/>
    <property type="match status" value="1"/>
</dbReference>
<dbReference type="InterPro" id="IPR030048">
    <property type="entry name" value="SurE"/>
</dbReference>
<dbReference type="InterPro" id="IPR002828">
    <property type="entry name" value="SurE-like_Pase/nucleotidase"/>
</dbReference>
<dbReference type="InterPro" id="IPR036523">
    <property type="entry name" value="SurE-like_sf"/>
</dbReference>
<dbReference type="NCBIfam" id="NF001489">
    <property type="entry name" value="PRK00346.1-3"/>
    <property type="match status" value="1"/>
</dbReference>
<dbReference type="NCBIfam" id="NF001490">
    <property type="entry name" value="PRK00346.1-4"/>
    <property type="match status" value="1"/>
</dbReference>
<dbReference type="NCBIfam" id="TIGR00087">
    <property type="entry name" value="surE"/>
    <property type="match status" value="1"/>
</dbReference>
<dbReference type="PANTHER" id="PTHR30457">
    <property type="entry name" value="5'-NUCLEOTIDASE SURE"/>
    <property type="match status" value="1"/>
</dbReference>
<dbReference type="PANTHER" id="PTHR30457:SF12">
    <property type="entry name" value="5'_3'-NUCLEOTIDASE SURE"/>
    <property type="match status" value="1"/>
</dbReference>
<dbReference type="Pfam" id="PF01975">
    <property type="entry name" value="SurE"/>
    <property type="match status" value="1"/>
</dbReference>
<dbReference type="SUPFAM" id="SSF64167">
    <property type="entry name" value="SurE-like"/>
    <property type="match status" value="1"/>
</dbReference>
<feature type="chain" id="PRO_0000235620" description="5'-nucleotidase SurE">
    <location>
        <begin position="1"/>
        <end position="250"/>
    </location>
</feature>
<feature type="binding site" evidence="1">
    <location>
        <position position="9"/>
    </location>
    <ligand>
        <name>a divalent metal cation</name>
        <dbReference type="ChEBI" id="CHEBI:60240"/>
    </ligand>
</feature>
<feature type="binding site" evidence="1">
    <location>
        <position position="10"/>
    </location>
    <ligand>
        <name>a divalent metal cation</name>
        <dbReference type="ChEBI" id="CHEBI:60240"/>
    </ligand>
</feature>
<feature type="binding site" evidence="1">
    <location>
        <position position="40"/>
    </location>
    <ligand>
        <name>a divalent metal cation</name>
        <dbReference type="ChEBI" id="CHEBI:60240"/>
    </ligand>
</feature>
<feature type="binding site" evidence="1">
    <location>
        <position position="92"/>
    </location>
    <ligand>
        <name>a divalent metal cation</name>
        <dbReference type="ChEBI" id="CHEBI:60240"/>
    </ligand>
</feature>
<proteinExistence type="inferred from homology"/>
<name>SURE_IDILO</name>
<accession>Q5QUC6</accession>
<organism>
    <name type="scientific">Idiomarina loihiensis (strain ATCC BAA-735 / DSM 15497 / L2-TR)</name>
    <dbReference type="NCBI Taxonomy" id="283942"/>
    <lineage>
        <taxon>Bacteria</taxon>
        <taxon>Pseudomonadati</taxon>
        <taxon>Pseudomonadota</taxon>
        <taxon>Gammaproteobacteria</taxon>
        <taxon>Alteromonadales</taxon>
        <taxon>Idiomarinaceae</taxon>
        <taxon>Idiomarina</taxon>
    </lineage>
</organism>
<protein>
    <recommendedName>
        <fullName evidence="1">5'-nucleotidase SurE</fullName>
        <ecNumber evidence="1">3.1.3.5</ecNumber>
    </recommendedName>
    <alternativeName>
        <fullName evidence="1">Nucleoside 5'-monophosphate phosphohydrolase</fullName>
    </alternativeName>
</protein>
<gene>
    <name evidence="1" type="primary">surE</name>
    <name type="ordered locus">IL0749</name>
</gene>
<evidence type="ECO:0000255" key="1">
    <source>
        <dbReference type="HAMAP-Rule" id="MF_00060"/>
    </source>
</evidence>
<keyword id="KW-0963">Cytoplasm</keyword>
<keyword id="KW-0378">Hydrolase</keyword>
<keyword id="KW-0479">Metal-binding</keyword>
<keyword id="KW-0547">Nucleotide-binding</keyword>
<keyword id="KW-1185">Reference proteome</keyword>
<reference key="1">
    <citation type="journal article" date="2004" name="Proc. Natl. Acad. Sci. U.S.A.">
        <title>Genome sequence of the deep-sea gamma-proteobacterium Idiomarina loihiensis reveals amino acid fermentation as a source of carbon and energy.</title>
        <authorList>
            <person name="Hou S."/>
            <person name="Saw J.H."/>
            <person name="Lee K.S."/>
            <person name="Freitas T.A."/>
            <person name="Belisle C."/>
            <person name="Kawarabayasi Y."/>
            <person name="Donachie S.P."/>
            <person name="Pikina A."/>
            <person name="Galperin M.Y."/>
            <person name="Koonin E.V."/>
            <person name="Makarova K.S."/>
            <person name="Omelchenko M.V."/>
            <person name="Sorokin A."/>
            <person name="Wolf Y.I."/>
            <person name="Li Q.X."/>
            <person name="Keum Y.S."/>
            <person name="Campbell S."/>
            <person name="Denery J."/>
            <person name="Aizawa S."/>
            <person name="Shibata S."/>
            <person name="Malahoff A."/>
            <person name="Alam M."/>
        </authorList>
    </citation>
    <scope>NUCLEOTIDE SEQUENCE [LARGE SCALE GENOMIC DNA]</scope>
    <source>
        <strain>ATCC BAA-735 / DSM 15497 / L2-TR</strain>
    </source>
</reference>
<sequence>MMKILLSNDDGVHAPGILALYQALKEVADVRVIAPDRNCSGASNSLTLHNPLRVRRLDNGFYSVNGTPTDCVHLGTNSPMAEDVDLVVSGINDSPNMGDDVLYSGTVAAAMEGRFMGLPAIAVSMGGRGHDYYDTAGRVVAEIVANMENDPLRLDTVLNINVPYTTYDKLKGTRVTKLGRRHRAETMVHDRDPFGSEIFWYGPIGHHASDEPNTDFTAIHEGYISITPLSLDMTAQRHTDTLTDWLEQQK</sequence>